<evidence type="ECO:0000250" key="1">
    <source>
        <dbReference type="UniProtKB" id="P25526"/>
    </source>
</evidence>
<evidence type="ECO:0000269" key="2">
    <source>
    </source>
</evidence>
<evidence type="ECO:0000303" key="3">
    <source>
    </source>
</evidence>
<evidence type="ECO:0000305" key="4"/>
<evidence type="ECO:0000312" key="5">
    <source>
        <dbReference type="EMBL" id="ADE70656.1"/>
    </source>
</evidence>
<feature type="chain" id="PRO_0000458974" description="3-sulfolactaldehyde dehydrogenase">
    <location>
        <begin position="1"/>
        <end position="477"/>
    </location>
</feature>
<feature type="active site" description="Proton acceptor" evidence="1">
    <location>
        <position position="252"/>
    </location>
</feature>
<feature type="active site" description="Nucleophile" evidence="1">
    <location>
        <position position="286"/>
    </location>
</feature>
<feature type="binding site" evidence="1">
    <location>
        <begin position="232"/>
        <end position="233"/>
    </location>
    <ligand>
        <name>NAD(+)</name>
        <dbReference type="ChEBI" id="CHEBI:57540"/>
    </ligand>
</feature>
<feature type="binding site" evidence="1">
    <location>
        <position position="253"/>
    </location>
    <ligand>
        <name>NAD(+)</name>
        <dbReference type="ChEBI" id="CHEBI:57540"/>
    </ligand>
</feature>
<feature type="binding site" evidence="1">
    <location>
        <position position="380"/>
    </location>
    <ligand>
        <name>NAD(+)</name>
        <dbReference type="ChEBI" id="CHEBI:57540"/>
    </ligand>
</feature>
<comment type="function">
    <text evidence="2">Part of the sulfo-TAL (or sulfo-SFT) pathway, a D-sulfoquinovose degradation pathway that produces sulfolactate (SL) (PubMed:33036753). Catalyzes the oxidation of 3-sulfolactaldehyde (SLA) to sulfolactate (SL) (PubMed:33036753).</text>
</comment>
<comment type="catalytic activity">
    <reaction evidence="2">
        <text>(2S)-3-sulfolactaldehyde + NAD(+) + H2O = (2S)-3-sulfolactate + NADH + 2 H(+)</text>
        <dbReference type="Rhea" id="RHEA:47932"/>
        <dbReference type="ChEBI" id="CHEBI:15377"/>
        <dbReference type="ChEBI" id="CHEBI:15378"/>
        <dbReference type="ChEBI" id="CHEBI:57540"/>
        <dbReference type="ChEBI" id="CHEBI:57945"/>
        <dbReference type="ChEBI" id="CHEBI:61289"/>
        <dbReference type="ChEBI" id="CHEBI:90109"/>
        <dbReference type="EC" id="1.2.1.97"/>
    </reaction>
    <physiologicalReaction direction="left-to-right" evidence="2">
        <dbReference type="Rhea" id="RHEA:47933"/>
    </physiologicalReaction>
</comment>
<comment type="similarity">
    <text evidence="4">Belongs to the aldehyde dehydrogenase family.</text>
</comment>
<organism>
    <name type="scientific">Priestia megaterium (strain ATCC 12872 / QMB1551)</name>
    <name type="common">Bacillus megaterium</name>
    <dbReference type="NCBI Taxonomy" id="545693"/>
    <lineage>
        <taxon>Bacteria</taxon>
        <taxon>Bacillati</taxon>
        <taxon>Bacillota</taxon>
        <taxon>Bacilli</taxon>
        <taxon>Bacillales</taxon>
        <taxon>Bacillaceae</taxon>
        <taxon>Priestia</taxon>
    </lineage>
</organism>
<reference key="1">
    <citation type="journal article" date="2011" name="J. Bacteriol.">
        <title>Genome sequences of the biotechnologically important Bacillus megaterium strains QM B1551 and DSM319.</title>
        <authorList>
            <person name="Eppinger M."/>
            <person name="Bunk B."/>
            <person name="Johns M.A."/>
            <person name="Edirisinghe J.N."/>
            <person name="Kutumbaka K.K."/>
            <person name="Koenig S.S."/>
            <person name="Creasy H.H."/>
            <person name="Rosovitz M.J."/>
            <person name="Riley D.R."/>
            <person name="Daugherty S."/>
            <person name="Martin M."/>
            <person name="Elbourne L.D."/>
            <person name="Paulsen I."/>
            <person name="Biedendieck R."/>
            <person name="Braun C."/>
            <person name="Grayburn S."/>
            <person name="Dhingra S."/>
            <person name="Lukyanchuk V."/>
            <person name="Ball B."/>
            <person name="Ul-Qamar R."/>
            <person name="Seibel J."/>
            <person name="Bremer E."/>
            <person name="Jahn D."/>
            <person name="Ravel J."/>
            <person name="Vary P.S."/>
        </authorList>
    </citation>
    <scope>NUCLEOTIDE SEQUENCE [LARGE SCALE GENOMIC DNA]</scope>
    <source>
        <strain>ATCC 12872 / DSM 1804 / QMB1551</strain>
    </source>
</reference>
<reference key="2">
    <citation type="journal article" date="2020" name="Biochem. Biophys. Res. Commun.">
        <title>A transaldolase-dependent sulfoglycolysis pathway in Bacillus megaterium DSM 1804.</title>
        <authorList>
            <person name="Liu Y."/>
            <person name="Wei Y."/>
            <person name="Zhou Y."/>
            <person name="Ang E.L."/>
            <person name="Zhao H."/>
            <person name="Zhang Y."/>
        </authorList>
    </citation>
    <scope>FUNCTION</scope>
    <scope>CATALYTIC ACTIVITY</scope>
    <source>
        <strain>ATCC 12872 / DSM 1804 / QMB1551</strain>
    </source>
</reference>
<dbReference type="EC" id="1.2.1.97" evidence="2"/>
<dbReference type="EMBL" id="CP001983">
    <property type="protein sequence ID" value="ADE70656.1"/>
    <property type="molecule type" value="Genomic_DNA"/>
</dbReference>
<dbReference type="RefSeq" id="WP_013058330.1">
    <property type="nucleotide sequence ID" value="NC_014019.1"/>
</dbReference>
<dbReference type="SMR" id="D5E1S7"/>
<dbReference type="STRING" id="545693.BMQ_3643"/>
<dbReference type="KEGG" id="bmq:BMQ_3643"/>
<dbReference type="eggNOG" id="COG1012">
    <property type="taxonomic scope" value="Bacteria"/>
</dbReference>
<dbReference type="HOGENOM" id="CLU_005391_1_0_9"/>
<dbReference type="Proteomes" id="UP000000935">
    <property type="component" value="Chromosome"/>
</dbReference>
<dbReference type="GO" id="GO:0008911">
    <property type="term" value="F:lactaldehyde dehydrogenase (NAD+) activity"/>
    <property type="evidence" value="ECO:0007669"/>
    <property type="project" value="TreeGrafter"/>
</dbReference>
<dbReference type="CDD" id="cd07149">
    <property type="entry name" value="ALDH_y4uC"/>
    <property type="match status" value="1"/>
</dbReference>
<dbReference type="FunFam" id="3.40.309.10:FF:000009">
    <property type="entry name" value="Aldehyde dehydrogenase A"/>
    <property type="match status" value="1"/>
</dbReference>
<dbReference type="FunFam" id="3.40.605.10:FF:000007">
    <property type="entry name" value="NAD/NADP-dependent betaine aldehyde dehydrogenase"/>
    <property type="match status" value="1"/>
</dbReference>
<dbReference type="Gene3D" id="3.40.605.10">
    <property type="entry name" value="Aldehyde Dehydrogenase, Chain A, domain 1"/>
    <property type="match status" value="1"/>
</dbReference>
<dbReference type="Gene3D" id="3.40.309.10">
    <property type="entry name" value="Aldehyde Dehydrogenase, Chain A, domain 2"/>
    <property type="match status" value="1"/>
</dbReference>
<dbReference type="InterPro" id="IPR016161">
    <property type="entry name" value="Ald_DH/histidinol_DH"/>
</dbReference>
<dbReference type="InterPro" id="IPR016163">
    <property type="entry name" value="Ald_DH_C"/>
</dbReference>
<dbReference type="InterPro" id="IPR016162">
    <property type="entry name" value="Ald_DH_N"/>
</dbReference>
<dbReference type="InterPro" id="IPR015590">
    <property type="entry name" value="Aldehyde_DH_dom"/>
</dbReference>
<dbReference type="InterPro" id="IPR051020">
    <property type="entry name" value="ALDH-related_metabolic_enz"/>
</dbReference>
<dbReference type="PANTHER" id="PTHR42991">
    <property type="entry name" value="ALDEHYDE DEHYDROGENASE"/>
    <property type="match status" value="1"/>
</dbReference>
<dbReference type="PANTHER" id="PTHR42991:SF1">
    <property type="entry name" value="ALDEHYDE DEHYDROGENASE"/>
    <property type="match status" value="1"/>
</dbReference>
<dbReference type="Pfam" id="PF00171">
    <property type="entry name" value="Aldedh"/>
    <property type="match status" value="1"/>
</dbReference>
<dbReference type="SUPFAM" id="SSF53720">
    <property type="entry name" value="ALDH-like"/>
    <property type="match status" value="1"/>
</dbReference>
<gene>
    <name evidence="3" type="primary">slaB</name>
    <name evidence="5" type="ordered locus">BMQ_3643</name>
</gene>
<keyword id="KW-0119">Carbohydrate metabolism</keyword>
<keyword id="KW-0520">NAD</keyword>
<keyword id="KW-0560">Oxidoreductase</keyword>
<keyword id="KW-1185">Reference proteome</keyword>
<accession>D5E1S7</accession>
<sequence length="477" mass="52093">MTSLTQVKQYGLYVNGEWETTAEKMEVLNKYTQQPAAEISVATKDDVNKAVASAKDALKNTFSPYERYEVLMKAADLLLSRQEEFAEILATEVGKSIRESRGEVERAATTLQISAEEAKRIHGEGVPVESAPGSENRMAFTVKVPVGVVAAITPFNVPINLVCHKLGPALAAGNSVVLKPAEVTPICALKLAELMEEAGLPKGRLQVLTGDGAEIGEWLLENQDVNMFTFTGSPRVGELIRSKAGLRKVSLELGNNSATIVHKDADLEKAASLISQKSFNNAGQVCISVQRIYVHTNIYTAFVNKLKEKTEKLVVGNPMDEQTDIGPMIRLKEAERVEEWVKEAVEEGAKIELGGKRDGAFYLPTILTNVNDDMKVCRQEVFGPAVAIAQYDEIDEVISKVNDSDYGLQAGLFTNDLQFAMKAAREIEVGGLIVNDASAYRVDHMPYGGVKKSGNGKEGPKYAIEEMTEERIIVLNL</sequence>
<protein>
    <recommendedName>
        <fullName evidence="4">3-sulfolactaldehyde dehydrogenase</fullName>
        <shortName evidence="3">SLA dehydrogenase</shortName>
        <ecNumber evidence="2">1.2.1.97</ecNumber>
    </recommendedName>
</protein>
<proteinExistence type="evidence at protein level"/>
<name>SLAD_PRIM1</name>